<reference key="1">
    <citation type="journal article" date="2009" name="J. Bacteriol.">
        <title>Complete and draft genome sequences of six members of the Aquificales.</title>
        <authorList>
            <person name="Reysenbach A.-L."/>
            <person name="Hamamura N."/>
            <person name="Podar M."/>
            <person name="Griffiths E."/>
            <person name="Ferreira S."/>
            <person name="Hochstein R."/>
            <person name="Heidelberg J."/>
            <person name="Johnson J."/>
            <person name="Mead D."/>
            <person name="Pohorille A."/>
            <person name="Sarmiento M."/>
            <person name="Schweighofer K."/>
            <person name="Seshadri R."/>
            <person name="Voytek M.A."/>
        </authorList>
    </citation>
    <scope>NUCLEOTIDE SEQUENCE [LARGE SCALE GENOMIC DNA]</scope>
    <source>
        <strain>DSM 14350 / EX-H1</strain>
    </source>
</reference>
<proteinExistence type="inferred from homology"/>
<accession>C0QQN3</accession>
<comment type="function">
    <text evidence="1">Binds to 23S rRNA. Forms part of two intersubunit bridges in the 70S ribosome.</text>
</comment>
<comment type="subunit">
    <text evidence="1">Part of the 50S ribosomal subunit. Forms a cluster with proteins L3 and L19. In the 70S ribosome, L14 and L19 interact and together make contacts with the 16S rRNA in bridges B5 and B8.</text>
</comment>
<comment type="similarity">
    <text evidence="1">Belongs to the universal ribosomal protein uL14 family.</text>
</comment>
<protein>
    <recommendedName>
        <fullName evidence="1">Large ribosomal subunit protein uL14</fullName>
    </recommendedName>
    <alternativeName>
        <fullName evidence="2">50S ribosomal protein L14</fullName>
    </alternativeName>
</protein>
<feature type="chain" id="PRO_1000166931" description="Large ribosomal subunit protein uL14">
    <location>
        <begin position="1"/>
        <end position="126"/>
    </location>
</feature>
<organism>
    <name type="scientific">Persephonella marina (strain DSM 14350 / EX-H1)</name>
    <dbReference type="NCBI Taxonomy" id="123214"/>
    <lineage>
        <taxon>Bacteria</taxon>
        <taxon>Pseudomonadati</taxon>
        <taxon>Aquificota</taxon>
        <taxon>Aquificia</taxon>
        <taxon>Aquificales</taxon>
        <taxon>Hydrogenothermaceae</taxon>
        <taxon>Persephonella</taxon>
    </lineage>
</organism>
<gene>
    <name evidence="1" type="primary">rplN</name>
    <name type="ordered locus">PERMA_1206</name>
</gene>
<dbReference type="EMBL" id="CP001230">
    <property type="protein sequence ID" value="ACO04089.1"/>
    <property type="molecule type" value="Genomic_DNA"/>
</dbReference>
<dbReference type="RefSeq" id="WP_012676327.1">
    <property type="nucleotide sequence ID" value="NC_012440.1"/>
</dbReference>
<dbReference type="SMR" id="C0QQN3"/>
<dbReference type="STRING" id="123214.PERMA_1206"/>
<dbReference type="PaxDb" id="123214-PERMA_1206"/>
<dbReference type="KEGG" id="pmx:PERMA_1206"/>
<dbReference type="eggNOG" id="COG0093">
    <property type="taxonomic scope" value="Bacteria"/>
</dbReference>
<dbReference type="HOGENOM" id="CLU_095071_2_1_0"/>
<dbReference type="OrthoDB" id="9806379at2"/>
<dbReference type="Proteomes" id="UP000001366">
    <property type="component" value="Chromosome"/>
</dbReference>
<dbReference type="GO" id="GO:0022625">
    <property type="term" value="C:cytosolic large ribosomal subunit"/>
    <property type="evidence" value="ECO:0007669"/>
    <property type="project" value="TreeGrafter"/>
</dbReference>
<dbReference type="GO" id="GO:0070180">
    <property type="term" value="F:large ribosomal subunit rRNA binding"/>
    <property type="evidence" value="ECO:0007669"/>
    <property type="project" value="TreeGrafter"/>
</dbReference>
<dbReference type="GO" id="GO:0003735">
    <property type="term" value="F:structural constituent of ribosome"/>
    <property type="evidence" value="ECO:0007669"/>
    <property type="project" value="InterPro"/>
</dbReference>
<dbReference type="GO" id="GO:0006412">
    <property type="term" value="P:translation"/>
    <property type="evidence" value="ECO:0007669"/>
    <property type="project" value="UniProtKB-UniRule"/>
</dbReference>
<dbReference type="CDD" id="cd00337">
    <property type="entry name" value="Ribosomal_uL14"/>
    <property type="match status" value="1"/>
</dbReference>
<dbReference type="Gene3D" id="2.40.150.20">
    <property type="entry name" value="Ribosomal protein L14"/>
    <property type="match status" value="1"/>
</dbReference>
<dbReference type="HAMAP" id="MF_01367">
    <property type="entry name" value="Ribosomal_uL14"/>
    <property type="match status" value="1"/>
</dbReference>
<dbReference type="InterPro" id="IPR000218">
    <property type="entry name" value="Ribosomal_uL14"/>
</dbReference>
<dbReference type="InterPro" id="IPR005745">
    <property type="entry name" value="Ribosomal_uL14_bac-type"/>
</dbReference>
<dbReference type="InterPro" id="IPR019972">
    <property type="entry name" value="Ribosomal_uL14_CS"/>
</dbReference>
<dbReference type="InterPro" id="IPR036853">
    <property type="entry name" value="Ribosomal_uL14_sf"/>
</dbReference>
<dbReference type="NCBIfam" id="TIGR01067">
    <property type="entry name" value="rplN_bact"/>
    <property type="match status" value="1"/>
</dbReference>
<dbReference type="PANTHER" id="PTHR11761">
    <property type="entry name" value="50S/60S RIBOSOMAL PROTEIN L14/L23"/>
    <property type="match status" value="1"/>
</dbReference>
<dbReference type="PANTHER" id="PTHR11761:SF3">
    <property type="entry name" value="LARGE RIBOSOMAL SUBUNIT PROTEIN UL14M"/>
    <property type="match status" value="1"/>
</dbReference>
<dbReference type="Pfam" id="PF00238">
    <property type="entry name" value="Ribosomal_L14"/>
    <property type="match status" value="1"/>
</dbReference>
<dbReference type="SMART" id="SM01374">
    <property type="entry name" value="Ribosomal_L14"/>
    <property type="match status" value="1"/>
</dbReference>
<dbReference type="SUPFAM" id="SSF50193">
    <property type="entry name" value="Ribosomal protein L14"/>
    <property type="match status" value="1"/>
</dbReference>
<dbReference type="PROSITE" id="PS00049">
    <property type="entry name" value="RIBOSOMAL_L14"/>
    <property type="match status" value="1"/>
</dbReference>
<name>RL14_PERMH</name>
<keyword id="KW-1185">Reference proteome</keyword>
<keyword id="KW-0687">Ribonucleoprotein</keyword>
<keyword id="KW-0689">Ribosomal protein</keyword>
<keyword id="KW-0694">RNA-binding</keyword>
<keyword id="KW-0699">rRNA-binding</keyword>
<sequence length="126" mass="13677">MIRRGTYLNTADNSGAKKVQCIGIPKKVNFGKQTDFATLGDVITVTVKDALPNGAAKKGKVYKAVVVRTAKEVSREDGSYIKFDDNAVVLLNNNLEPIGTRILGPVAREIRAKGFYRIVSLAPEVI</sequence>
<evidence type="ECO:0000255" key="1">
    <source>
        <dbReference type="HAMAP-Rule" id="MF_01367"/>
    </source>
</evidence>
<evidence type="ECO:0000305" key="2"/>